<evidence type="ECO:0000250" key="1"/>
<evidence type="ECO:0000250" key="2">
    <source>
        <dbReference type="UniProtKB" id="P70627"/>
    </source>
</evidence>
<evidence type="ECO:0000250" key="3">
    <source>
        <dbReference type="UniProtKB" id="Q04609"/>
    </source>
</evidence>
<evidence type="ECO:0000250" key="4">
    <source>
        <dbReference type="UniProtKB" id="Q9Y3Q0"/>
    </source>
</evidence>
<evidence type="ECO:0000255" key="5"/>
<evidence type="ECO:0000305" key="6"/>
<reference key="1">
    <citation type="journal article" date="1998" name="J. Biol. Chem.">
        <title>Folylpoly-gamma-glutamate carboxypeptidase from pig jejunum. Molecular characterization and relation to glutamate carboxypeptidase II.</title>
        <authorList>
            <person name="Halsted C.H."/>
            <person name="Ling E.-H."/>
            <person name="Luthi-Carter R."/>
            <person name="Villanueva J.A."/>
            <person name="Gardner J.M."/>
            <person name="Coyle J.T."/>
        </authorList>
    </citation>
    <scope>NUCLEOTIDE SEQUENCE [MRNA]</scope>
    <scope>PROTEIN SEQUENCE OF 200-210 AND 471-483</scope>
    <source>
        <tissue>Jejunal mucosa</tissue>
    </source>
</reference>
<reference key="2">
    <citation type="journal article" date="2000" name="J. Biol. Chem.">
        <authorList>
            <person name="Halsted C.H."/>
            <person name="Ling E.-H."/>
            <person name="Luthi-Carter R."/>
            <person name="Villanueva J.A."/>
            <person name="Gardner J.M."/>
            <person name="Coyle J.T."/>
        </authorList>
    </citation>
    <scope>ERRATUM OF PUBMED:9685395</scope>
</reference>
<reference key="3">
    <citation type="journal article" date="1986" name="J. Biol. Chem.">
        <title>Pteroylpolyglutamate hydrolase from human jejunal brush borders. Purification and characterization.</title>
        <authorList>
            <person name="Chandler C.J."/>
            <person name="Wang T.T."/>
            <person name="Halsted C.H."/>
        </authorList>
    </citation>
    <scope>CHARACTERIZATION</scope>
</reference>
<accession>O77564</accession>
<protein>
    <recommendedName>
        <fullName>Glutamate carboxypeptidase 2</fullName>
        <ecNumber>3.4.17.21</ecNumber>
    </recommendedName>
    <alternativeName>
        <fullName>Folate hydrolase 1</fullName>
    </alternativeName>
    <alternativeName>
        <fullName>Folylpoly-gamma-glutamate carboxypeptidase</fullName>
        <shortName>FGCP</shortName>
    </alternativeName>
    <alternativeName>
        <fullName>Glutamate carboxypeptidase II</fullName>
        <shortName>GCPII</shortName>
    </alternativeName>
    <alternativeName>
        <fullName>Membrane glutamate carboxypeptidase</fullName>
        <shortName>mGCP</shortName>
    </alternativeName>
    <alternativeName>
        <fullName>N-acetylated-alpha-linked acidic dipeptidase I</fullName>
        <shortName>NAALADase I</shortName>
    </alternativeName>
    <alternativeName>
        <fullName>Prostate-specific membrane antigen homolog</fullName>
    </alternativeName>
    <alternativeName>
        <fullName>Pteroylpoly-gamma-glutamate carboxypeptidase</fullName>
    </alternativeName>
</protein>
<organism>
    <name type="scientific">Sus scrofa</name>
    <name type="common">Pig</name>
    <dbReference type="NCBI Taxonomy" id="9823"/>
    <lineage>
        <taxon>Eukaryota</taxon>
        <taxon>Metazoa</taxon>
        <taxon>Chordata</taxon>
        <taxon>Craniata</taxon>
        <taxon>Vertebrata</taxon>
        <taxon>Euteleostomi</taxon>
        <taxon>Mammalia</taxon>
        <taxon>Eutheria</taxon>
        <taxon>Laurasiatheria</taxon>
        <taxon>Artiodactyla</taxon>
        <taxon>Suina</taxon>
        <taxon>Suidae</taxon>
        <taxon>Sus</taxon>
    </lineage>
</organism>
<dbReference type="EC" id="3.4.17.21"/>
<dbReference type="EMBL" id="AF050502">
    <property type="protein sequence ID" value="AAC39269.1"/>
    <property type="molecule type" value="mRNA"/>
</dbReference>
<dbReference type="RefSeq" id="NP_999549.1">
    <property type="nucleotide sequence ID" value="NM_214384.1"/>
</dbReference>
<dbReference type="SMR" id="O77564"/>
<dbReference type="FunCoup" id="O77564">
    <property type="interactions" value="131"/>
</dbReference>
<dbReference type="STRING" id="9823.ENSSSCP00000053842"/>
<dbReference type="MEROPS" id="M28.010"/>
<dbReference type="GlyCosmos" id="O77564">
    <property type="glycosylation" value="12 sites, No reported glycans"/>
</dbReference>
<dbReference type="GlyGen" id="O77564">
    <property type="glycosylation" value="12 sites"/>
</dbReference>
<dbReference type="PaxDb" id="9823-ENSSSCP00000027466"/>
<dbReference type="PeptideAtlas" id="O77564"/>
<dbReference type="GeneID" id="397677"/>
<dbReference type="KEGG" id="ssc:397677"/>
<dbReference type="CTD" id="219595"/>
<dbReference type="eggNOG" id="KOG2195">
    <property type="taxonomic scope" value="Eukaryota"/>
</dbReference>
<dbReference type="InParanoid" id="O77564"/>
<dbReference type="OrthoDB" id="5841748at2759"/>
<dbReference type="Proteomes" id="UP000008227">
    <property type="component" value="Unplaced"/>
</dbReference>
<dbReference type="Proteomes" id="UP000314985">
    <property type="component" value="Unplaced"/>
</dbReference>
<dbReference type="Proteomes" id="UP000694570">
    <property type="component" value="Unplaced"/>
</dbReference>
<dbReference type="Proteomes" id="UP000694571">
    <property type="component" value="Unplaced"/>
</dbReference>
<dbReference type="Proteomes" id="UP000694720">
    <property type="component" value="Unplaced"/>
</dbReference>
<dbReference type="Proteomes" id="UP000694722">
    <property type="component" value="Unplaced"/>
</dbReference>
<dbReference type="Proteomes" id="UP000694723">
    <property type="component" value="Unplaced"/>
</dbReference>
<dbReference type="Proteomes" id="UP000694724">
    <property type="component" value="Unplaced"/>
</dbReference>
<dbReference type="Proteomes" id="UP000694725">
    <property type="component" value="Unplaced"/>
</dbReference>
<dbReference type="Proteomes" id="UP000694726">
    <property type="component" value="Unplaced"/>
</dbReference>
<dbReference type="Proteomes" id="UP000694727">
    <property type="component" value="Unplaced"/>
</dbReference>
<dbReference type="Proteomes" id="UP000694728">
    <property type="component" value="Unplaced"/>
</dbReference>
<dbReference type="GO" id="GO:0005886">
    <property type="term" value="C:plasma membrane"/>
    <property type="evidence" value="ECO:0000318"/>
    <property type="project" value="GO_Central"/>
</dbReference>
<dbReference type="GO" id="GO:0004180">
    <property type="term" value="F:carboxypeptidase activity"/>
    <property type="evidence" value="ECO:0000318"/>
    <property type="project" value="GO_Central"/>
</dbReference>
<dbReference type="GO" id="GO:0016805">
    <property type="term" value="F:dipeptidase activity"/>
    <property type="evidence" value="ECO:0007669"/>
    <property type="project" value="UniProtKB-KW"/>
</dbReference>
<dbReference type="GO" id="GO:0046872">
    <property type="term" value="F:metal ion binding"/>
    <property type="evidence" value="ECO:0007669"/>
    <property type="project" value="UniProtKB-KW"/>
</dbReference>
<dbReference type="GO" id="GO:0004181">
    <property type="term" value="F:metallocarboxypeptidase activity"/>
    <property type="evidence" value="ECO:0007669"/>
    <property type="project" value="UniProtKB-EC"/>
</dbReference>
<dbReference type="GO" id="GO:0006508">
    <property type="term" value="P:proteolysis"/>
    <property type="evidence" value="ECO:0007669"/>
    <property type="project" value="UniProtKB-KW"/>
</dbReference>
<dbReference type="CDD" id="cd08022">
    <property type="entry name" value="M28_PSMA_like"/>
    <property type="match status" value="1"/>
</dbReference>
<dbReference type="CDD" id="cd02121">
    <property type="entry name" value="PA_GCPII_like"/>
    <property type="match status" value="1"/>
</dbReference>
<dbReference type="FunFam" id="3.40.630.10:FF:000059">
    <property type="entry name" value="Glutamate carboxypeptidase 2"/>
    <property type="match status" value="1"/>
</dbReference>
<dbReference type="FunFam" id="1.20.930.40:FF:000001">
    <property type="entry name" value="N-acetylated-alpha-linked acidic dipeptidase 2"/>
    <property type="match status" value="1"/>
</dbReference>
<dbReference type="FunFam" id="3.50.30.30:FF:000002">
    <property type="entry name" value="N-acetylated-alpha-linked acidic dipeptidase 2"/>
    <property type="match status" value="1"/>
</dbReference>
<dbReference type="Gene3D" id="3.50.30.30">
    <property type="match status" value="1"/>
</dbReference>
<dbReference type="Gene3D" id="1.20.930.40">
    <property type="entry name" value="Transferrin receptor-like, dimerisation domain"/>
    <property type="match status" value="1"/>
</dbReference>
<dbReference type="Gene3D" id="3.40.630.10">
    <property type="entry name" value="Zn peptidases"/>
    <property type="match status" value="1"/>
</dbReference>
<dbReference type="InterPro" id="IPR046450">
    <property type="entry name" value="PA_dom_sf"/>
</dbReference>
<dbReference type="InterPro" id="IPR003137">
    <property type="entry name" value="PA_domain"/>
</dbReference>
<dbReference type="InterPro" id="IPR007484">
    <property type="entry name" value="Peptidase_M28"/>
</dbReference>
<dbReference type="InterPro" id="IPR039373">
    <property type="entry name" value="Peptidase_M28B"/>
</dbReference>
<dbReference type="InterPro" id="IPR007365">
    <property type="entry name" value="TFR-like_dimer_dom"/>
</dbReference>
<dbReference type="InterPro" id="IPR036757">
    <property type="entry name" value="TFR-like_dimer_dom_sf"/>
</dbReference>
<dbReference type="PANTHER" id="PTHR10404:SF36">
    <property type="entry name" value="GLUTAMATE CARBOXYPEPTIDASE 2"/>
    <property type="match status" value="1"/>
</dbReference>
<dbReference type="PANTHER" id="PTHR10404">
    <property type="entry name" value="N-ACETYLATED-ALPHA-LINKED ACIDIC DIPEPTIDASE"/>
    <property type="match status" value="1"/>
</dbReference>
<dbReference type="Pfam" id="PF02225">
    <property type="entry name" value="PA"/>
    <property type="match status" value="1"/>
</dbReference>
<dbReference type="Pfam" id="PF04389">
    <property type="entry name" value="Peptidase_M28"/>
    <property type="match status" value="1"/>
</dbReference>
<dbReference type="Pfam" id="PF04253">
    <property type="entry name" value="TFR_dimer"/>
    <property type="match status" value="1"/>
</dbReference>
<dbReference type="SUPFAM" id="SSF52025">
    <property type="entry name" value="PA domain"/>
    <property type="match status" value="1"/>
</dbReference>
<dbReference type="SUPFAM" id="SSF47672">
    <property type="entry name" value="Transferrin receptor-like dimerisation domain"/>
    <property type="match status" value="1"/>
</dbReference>
<dbReference type="SUPFAM" id="SSF53187">
    <property type="entry name" value="Zn-dependent exopeptidases"/>
    <property type="match status" value="1"/>
</dbReference>
<proteinExistence type="evidence at protein level"/>
<feature type="chain" id="PRO_0000174119" description="Glutamate carboxypeptidase 2">
    <location>
        <begin position="1"/>
        <end position="751"/>
    </location>
</feature>
<feature type="topological domain" description="Cytoplasmic" evidence="5">
    <location>
        <begin position="1"/>
        <end position="19"/>
    </location>
</feature>
<feature type="transmembrane region" description="Helical; Signal-anchor for type II membrane protein" evidence="5">
    <location>
        <begin position="20"/>
        <end position="43"/>
    </location>
</feature>
<feature type="topological domain" description="Extracellular" evidence="5">
    <location>
        <begin position="44"/>
        <end position="750"/>
    </location>
</feature>
<feature type="region of interest" description="NAALADase">
    <location>
        <begin position="275"/>
        <end position="588"/>
    </location>
</feature>
<feature type="active site" description="Nucleophile; for NAALADase activity" evidence="1">
    <location>
        <position position="425"/>
    </location>
</feature>
<feature type="active site" description="Charge relay system" evidence="5">
    <location>
        <position position="629"/>
    </location>
</feature>
<feature type="active site" description="Charge relay system" evidence="5">
    <location>
        <position position="667"/>
    </location>
</feature>
<feature type="active site" description="Charge relay system" evidence="5">
    <location>
        <position position="690"/>
    </location>
</feature>
<feature type="binding site" evidence="4">
    <location>
        <position position="211"/>
    </location>
    <ligand>
        <name>substrate</name>
    </ligand>
</feature>
<feature type="binding site" evidence="4">
    <location>
        <position position="258"/>
    </location>
    <ligand>
        <name>substrate</name>
    </ligand>
</feature>
<feature type="binding site" evidence="3">
    <location>
        <position position="270"/>
    </location>
    <ligand>
        <name>Ca(2+)</name>
        <dbReference type="ChEBI" id="CHEBI:29108"/>
    </ligand>
</feature>
<feature type="binding site" evidence="3">
    <location>
        <position position="273"/>
    </location>
    <ligand>
        <name>Ca(2+)</name>
        <dbReference type="ChEBI" id="CHEBI:29108"/>
    </ligand>
</feature>
<feature type="binding site" evidence="4">
    <location>
        <position position="378"/>
    </location>
    <ligand>
        <name>Zn(2+)</name>
        <dbReference type="ChEBI" id="CHEBI:29105"/>
        <label>1</label>
        <note>catalytic</note>
    </ligand>
</feature>
<feature type="binding site" evidence="4">
    <location>
        <position position="388"/>
    </location>
    <ligand>
        <name>Zn(2+)</name>
        <dbReference type="ChEBI" id="CHEBI:29105"/>
        <label>1</label>
        <note>catalytic</note>
    </ligand>
</feature>
<feature type="binding site" evidence="3">
    <location>
        <position position="388"/>
    </location>
    <ligand>
        <name>Zn(2+)</name>
        <dbReference type="ChEBI" id="CHEBI:29105"/>
        <label>2</label>
    </ligand>
</feature>
<feature type="binding site" evidence="4">
    <location>
        <position position="425"/>
    </location>
    <ligand>
        <name>substrate</name>
    </ligand>
</feature>
<feature type="binding site" evidence="3">
    <location>
        <position position="426"/>
    </location>
    <ligand>
        <name>Zn(2+)</name>
        <dbReference type="ChEBI" id="CHEBI:29105"/>
        <label>2</label>
    </ligand>
</feature>
<feature type="binding site" evidence="3">
    <location>
        <position position="434"/>
    </location>
    <ligand>
        <name>Ca(2+)</name>
        <dbReference type="ChEBI" id="CHEBI:29108"/>
    </ligand>
</feature>
<feature type="binding site" evidence="3">
    <location>
        <position position="437"/>
    </location>
    <ligand>
        <name>Ca(2+)</name>
        <dbReference type="ChEBI" id="CHEBI:29108"/>
    </ligand>
</feature>
<feature type="binding site" evidence="4">
    <location>
        <position position="454"/>
    </location>
    <ligand>
        <name>Zn(2+)</name>
        <dbReference type="ChEBI" id="CHEBI:29105"/>
        <label>1</label>
        <note>catalytic</note>
    </ligand>
</feature>
<feature type="binding site" evidence="4">
    <location>
        <begin position="518"/>
        <end position="519"/>
    </location>
    <ligand>
        <name>substrate</name>
    </ligand>
</feature>
<feature type="binding site" evidence="3">
    <location>
        <position position="520"/>
    </location>
    <ligand>
        <name>substrate</name>
    </ligand>
</feature>
<feature type="binding site" evidence="3">
    <location>
        <begin position="535"/>
        <end position="537"/>
    </location>
    <ligand>
        <name>substrate</name>
    </ligand>
</feature>
<feature type="binding site" evidence="4">
    <location>
        <begin position="553"/>
        <end position="554"/>
    </location>
    <ligand>
        <name>substrate</name>
    </ligand>
</feature>
<feature type="binding site" evidence="3">
    <location>
        <position position="553"/>
    </location>
    <ligand>
        <name>substrate</name>
    </ligand>
</feature>
<feature type="binding site" evidence="3">
    <location>
        <position position="554"/>
    </location>
    <ligand>
        <name>Zn(2+)</name>
        <dbReference type="ChEBI" id="CHEBI:29105"/>
        <label>2</label>
    </ligand>
</feature>
<feature type="binding site" evidence="4">
    <location>
        <begin position="700"/>
        <end position="701"/>
    </location>
    <ligand>
        <name>substrate</name>
    </ligand>
</feature>
<feature type="modified residue" description="Phosphoserine" evidence="2">
    <location>
        <position position="10"/>
    </location>
</feature>
<feature type="glycosylation site" description="N-linked (GlcNAc...) asparagine" evidence="3">
    <location>
        <position position="51"/>
    </location>
</feature>
<feature type="glycosylation site" description="N-linked (GlcNAc...) asparagine" evidence="3">
    <location>
        <position position="77"/>
    </location>
</feature>
<feature type="glycosylation site" description="N-linked (GlcNAc...) asparagine" evidence="3">
    <location>
        <position position="122"/>
    </location>
</feature>
<feature type="glycosylation site" description="N-linked (GlcNAc...) asparagine" evidence="3">
    <location>
        <position position="141"/>
    </location>
</feature>
<feature type="glycosylation site" description="N-linked (GlcNAc...) asparagine" evidence="3">
    <location>
        <position position="154"/>
    </location>
</feature>
<feature type="glycosylation site" description="N-linked (GlcNAc...) asparagine" evidence="3">
    <location>
        <position position="196"/>
    </location>
</feature>
<feature type="glycosylation site" description="N-linked (GlcNAc...) asparagine" evidence="3">
    <location>
        <position position="337"/>
    </location>
</feature>
<feature type="glycosylation site" description="N-linked (GlcNAc...) asparagine" evidence="3">
    <location>
        <position position="460"/>
    </location>
</feature>
<feature type="glycosylation site" description="N-linked (GlcNAc...) asparagine" evidence="3">
    <location>
        <position position="477"/>
    </location>
</feature>
<feature type="glycosylation site" description="N-linked (GlcNAc...) asparagine" evidence="5">
    <location>
        <position position="614"/>
    </location>
</feature>
<feature type="glycosylation site" description="N-linked (GlcNAc...) asparagine" evidence="3">
    <location>
        <position position="639"/>
    </location>
</feature>
<feature type="glycosylation site" description="N-linked (GlcNAc...) asparagine" evidence="5">
    <location>
        <position position="646"/>
    </location>
</feature>
<keyword id="KW-0106">Calcium</keyword>
<keyword id="KW-0121">Carboxypeptidase</keyword>
<keyword id="KW-1003">Cell membrane</keyword>
<keyword id="KW-0224">Dipeptidase</keyword>
<keyword id="KW-0903">Direct protein sequencing</keyword>
<keyword id="KW-0325">Glycoprotein</keyword>
<keyword id="KW-0378">Hydrolase</keyword>
<keyword id="KW-0472">Membrane</keyword>
<keyword id="KW-0479">Metal-binding</keyword>
<keyword id="KW-0482">Metalloprotease</keyword>
<keyword id="KW-0511">Multifunctional enzyme</keyword>
<keyword id="KW-0597">Phosphoprotein</keyword>
<keyword id="KW-0645">Protease</keyword>
<keyword id="KW-1185">Reference proteome</keyword>
<keyword id="KW-0735">Signal-anchor</keyword>
<keyword id="KW-0812">Transmembrane</keyword>
<keyword id="KW-1133">Transmembrane helix</keyword>
<keyword id="KW-0862">Zinc</keyword>
<sequence length="751" mass="84524">MWNPLHETDSTSVAWRRPRWLCAGALVLAAGLFVLGFLFGWFIKSPNEAANISPQHNVKKAFLDELKAENIKTFLYNFTRIPHLAGTEQNFQLAKQIQSQWKEFGLDSVELAHYDVLLSYPNKTRPNYISIIDEDGNEIFNTSLFEPPPPGYENVSDVVPPFSAFSPQGMPEGDLVYVNYARTEDFFKLERDMKINCSGKILIARYGKIFRGNKVKNAQLAGAKGIILYSDPADYFAPGVQSYPDGWNLPGGGVQRGNILNLNGAGDPLTPGYPANEYAYRLQIAEAVGLPRIPVHPIGYSDAQKLLEKMGGSAPPDDSWKGSLHVPYNVGPGFTGNFSTQKVKMHIHSDNKVKRIYNVIGTLRGAVEPDRYVILGGHRDSWVFGGIDPQSGAAVVHEIVRSFGKLKKEGWRPRRTVLFASWDAEEYGLFGSTEWAEENSRILQERGVAYINADSSIEGNYTLRVDCTPLMYSLVYNLTKELQSPDEGFEGKSLFESWNEKSPSPEFSGLPRISKLGSGNDFEVFFQRLGIASGRARYTKDWVTNKFSSYPLYHSVYETYELVEKFYDPTFKYHLAVAQVRGGIVFELANSVVRPFDCRDYAVVLRNYADKLYNISMNHPQEMKAYSVSFDSLFSAVKNFTEIASNFSERVQDLDKNNPILLRIMNDQLMFLERAFIVPLGLPDRAFYRHVIYAPSSHNKYMGESFPGIYDALFDIENKVDPSKAWGEVKRQISIAAFTVQAAAGTLREVA</sequence>
<name>FOLH1_PIG</name>
<gene>
    <name type="primary">FOLH1</name>
    <name type="synonym">NAALAD1</name>
</gene>
<comment type="function">
    <text evidence="1">Has both folate hydrolase and N-acetylated-alpha-linked-acidic dipeptidase (NAALADase) activity. Has a preference for tri-alpha-glutamate peptides (By similarity). In the intestine, required for the uptake of folate. In the brain, modulates excitatory neurotransmission through the hydrolysis of the neuropeptide, N-aceylaspartylglutamate (NAAG), thereby releasing glutamate.</text>
</comment>
<comment type="function">
    <text evidence="1">Also exhibits a dipeptidyl-peptidase IV type activity. In vitro, cleaves Gly-Pro-AMC.</text>
</comment>
<comment type="catalytic activity">
    <reaction>
        <text>Release of an unsubstituted, C-terminal glutamyl residue, typically from Ac-Asp-Glu or folylpoly-gamma-glutamates.</text>
        <dbReference type="EC" id="3.4.17.21"/>
    </reaction>
</comment>
<comment type="cofactor">
    <cofactor>
        <name>Zn(2+)</name>
        <dbReference type="ChEBI" id="CHEBI:29105"/>
    </cofactor>
    <text>Binds 2 Zn(2+) ions per subunit. Required for NAALADase activity.</text>
</comment>
<comment type="activity regulation">
    <text>The NAALADase activity is inhibited by quisqualic acid, beta-NAAG and 2-(phosphonomethyl) pentanedioic acid (PMPA). Ethanol ingestion decreases the folate hydrolase activity by 50%.</text>
</comment>
<comment type="biophysicochemical properties">
    <phDependence>
        <text>Optimum pH is 6.0.</text>
    </phDependence>
</comment>
<comment type="subunit">
    <text evidence="1">Homodimer.</text>
</comment>
<comment type="subcellular location">
    <subcellularLocation>
        <location evidence="3">Cell membrane</location>
        <topology evidence="3">Single-pass type II membrane protein</topology>
    </subcellularLocation>
</comment>
<comment type="tissue specificity">
    <text>High expression in the duodenum and in the jejunum brush-border membrane. Weak expression in kidney.</text>
</comment>
<comment type="domain">
    <text>The NAALADase activity is found in the central region, the dipeptidyl peptidase IV type activity in the C-terminal.</text>
</comment>
<comment type="similarity">
    <text evidence="6">Belongs to the peptidase M28 family. M28B subfamily.</text>
</comment>